<comment type="similarity">
    <text evidence="1">Belongs to the eukaryotic ribosomal protein eS17 family.</text>
</comment>
<evidence type="ECO:0000255" key="1">
    <source>
        <dbReference type="HAMAP-Rule" id="MF_00511"/>
    </source>
</evidence>
<evidence type="ECO:0000305" key="2"/>
<gene>
    <name evidence="1" type="primary">rps17e</name>
    <name type="ordered locus">MA_4472</name>
</gene>
<name>RS17E_METAC</name>
<protein>
    <recommendedName>
        <fullName evidence="1">Small ribosomal subunit protein eS17</fullName>
    </recommendedName>
    <alternativeName>
        <fullName evidence="2">30S ribosomal protein S17e</fullName>
    </alternativeName>
</protein>
<keyword id="KW-1185">Reference proteome</keyword>
<keyword id="KW-0687">Ribonucleoprotein</keyword>
<keyword id="KW-0689">Ribosomal protein</keyword>
<proteinExistence type="inferred from homology"/>
<sequence>MGNIRETNIKRTAFSLLENYGDVFTKDFETNKALVTKYTTIESKIIRNRVAGYVTRKVARMKVY</sequence>
<accession>Q8THP2</accession>
<organism>
    <name type="scientific">Methanosarcina acetivorans (strain ATCC 35395 / DSM 2834 / JCM 12185 / C2A)</name>
    <dbReference type="NCBI Taxonomy" id="188937"/>
    <lineage>
        <taxon>Archaea</taxon>
        <taxon>Methanobacteriati</taxon>
        <taxon>Methanobacteriota</taxon>
        <taxon>Stenosarchaea group</taxon>
        <taxon>Methanomicrobia</taxon>
        <taxon>Methanosarcinales</taxon>
        <taxon>Methanosarcinaceae</taxon>
        <taxon>Methanosarcina</taxon>
    </lineage>
</organism>
<reference key="1">
    <citation type="journal article" date="2002" name="Genome Res.">
        <title>The genome of Methanosarcina acetivorans reveals extensive metabolic and physiological diversity.</title>
        <authorList>
            <person name="Galagan J.E."/>
            <person name="Nusbaum C."/>
            <person name="Roy A."/>
            <person name="Endrizzi M.G."/>
            <person name="Macdonald P."/>
            <person name="FitzHugh W."/>
            <person name="Calvo S."/>
            <person name="Engels R."/>
            <person name="Smirnov S."/>
            <person name="Atnoor D."/>
            <person name="Brown A."/>
            <person name="Allen N."/>
            <person name="Naylor J."/>
            <person name="Stange-Thomann N."/>
            <person name="DeArellano K."/>
            <person name="Johnson R."/>
            <person name="Linton L."/>
            <person name="McEwan P."/>
            <person name="McKernan K."/>
            <person name="Talamas J."/>
            <person name="Tirrell A."/>
            <person name="Ye W."/>
            <person name="Zimmer A."/>
            <person name="Barber R.D."/>
            <person name="Cann I."/>
            <person name="Graham D.E."/>
            <person name="Grahame D.A."/>
            <person name="Guss A.M."/>
            <person name="Hedderich R."/>
            <person name="Ingram-Smith C."/>
            <person name="Kuettner H.C."/>
            <person name="Krzycki J.A."/>
            <person name="Leigh J.A."/>
            <person name="Li W."/>
            <person name="Liu J."/>
            <person name="Mukhopadhyay B."/>
            <person name="Reeve J.N."/>
            <person name="Smith K."/>
            <person name="Springer T.A."/>
            <person name="Umayam L.A."/>
            <person name="White O."/>
            <person name="White R.H."/>
            <person name="de Macario E.C."/>
            <person name="Ferry J.G."/>
            <person name="Jarrell K.F."/>
            <person name="Jing H."/>
            <person name="Macario A.J.L."/>
            <person name="Paulsen I.T."/>
            <person name="Pritchett M."/>
            <person name="Sowers K.R."/>
            <person name="Swanson R.V."/>
            <person name="Zinder S.H."/>
            <person name="Lander E."/>
            <person name="Metcalf W.W."/>
            <person name="Birren B."/>
        </authorList>
    </citation>
    <scope>NUCLEOTIDE SEQUENCE [LARGE SCALE GENOMIC DNA]</scope>
    <source>
        <strain>ATCC 35395 / DSM 2834 / JCM 12185 / C2A</strain>
    </source>
</reference>
<feature type="chain" id="PRO_0000141552" description="Small ribosomal subunit protein eS17">
    <location>
        <begin position="1"/>
        <end position="64"/>
    </location>
</feature>
<dbReference type="EMBL" id="AE010299">
    <property type="protein sequence ID" value="AAM07812.1"/>
    <property type="molecule type" value="Genomic_DNA"/>
</dbReference>
<dbReference type="RefSeq" id="WP_011024348.1">
    <property type="nucleotide sequence ID" value="NC_003552.1"/>
</dbReference>
<dbReference type="SMR" id="Q8THP2"/>
<dbReference type="FunCoup" id="Q8THP2">
    <property type="interactions" value="57"/>
</dbReference>
<dbReference type="STRING" id="188937.MA_4472"/>
<dbReference type="EnsemblBacteria" id="AAM07812">
    <property type="protein sequence ID" value="AAM07812"/>
    <property type="gene ID" value="MA_4472"/>
</dbReference>
<dbReference type="GeneID" id="24829258"/>
<dbReference type="KEGG" id="mac:MA_4472"/>
<dbReference type="HOGENOM" id="CLU_176720_1_0_2"/>
<dbReference type="InParanoid" id="Q8THP2"/>
<dbReference type="OrthoDB" id="52479at2157"/>
<dbReference type="PhylomeDB" id="Q8THP2"/>
<dbReference type="Proteomes" id="UP000002487">
    <property type="component" value="Chromosome"/>
</dbReference>
<dbReference type="GO" id="GO:0005829">
    <property type="term" value="C:cytosol"/>
    <property type="evidence" value="ECO:0007669"/>
    <property type="project" value="UniProtKB-ARBA"/>
</dbReference>
<dbReference type="GO" id="GO:1990904">
    <property type="term" value="C:ribonucleoprotein complex"/>
    <property type="evidence" value="ECO:0007669"/>
    <property type="project" value="UniProtKB-KW"/>
</dbReference>
<dbReference type="GO" id="GO:0005840">
    <property type="term" value="C:ribosome"/>
    <property type="evidence" value="ECO:0007669"/>
    <property type="project" value="UniProtKB-KW"/>
</dbReference>
<dbReference type="GO" id="GO:0003735">
    <property type="term" value="F:structural constituent of ribosome"/>
    <property type="evidence" value="ECO:0007669"/>
    <property type="project" value="InterPro"/>
</dbReference>
<dbReference type="GO" id="GO:0006412">
    <property type="term" value="P:translation"/>
    <property type="evidence" value="ECO:0007669"/>
    <property type="project" value="UniProtKB-UniRule"/>
</dbReference>
<dbReference type="Gene3D" id="1.10.60.20">
    <property type="entry name" value="Ribosomal protein S17e-like"/>
    <property type="match status" value="1"/>
</dbReference>
<dbReference type="HAMAP" id="MF_00511">
    <property type="entry name" value="Ribosomal_eS17"/>
    <property type="match status" value="1"/>
</dbReference>
<dbReference type="InterPro" id="IPR001210">
    <property type="entry name" value="Ribosomal_eS17"/>
</dbReference>
<dbReference type="InterPro" id="IPR018273">
    <property type="entry name" value="Ribosomal_eS17_CS"/>
</dbReference>
<dbReference type="InterPro" id="IPR036401">
    <property type="entry name" value="Ribosomal_eS17_sf"/>
</dbReference>
<dbReference type="NCBIfam" id="NF002242">
    <property type="entry name" value="PRK01151.1"/>
    <property type="match status" value="1"/>
</dbReference>
<dbReference type="PANTHER" id="PTHR10732">
    <property type="entry name" value="40S RIBOSOMAL PROTEIN S17"/>
    <property type="match status" value="1"/>
</dbReference>
<dbReference type="PANTHER" id="PTHR10732:SF0">
    <property type="entry name" value="40S RIBOSOMAL PROTEIN S17"/>
    <property type="match status" value="1"/>
</dbReference>
<dbReference type="Pfam" id="PF00833">
    <property type="entry name" value="Ribosomal_S17e"/>
    <property type="match status" value="1"/>
</dbReference>
<dbReference type="SUPFAM" id="SSF116820">
    <property type="entry name" value="Rps17e-like"/>
    <property type="match status" value="1"/>
</dbReference>
<dbReference type="PROSITE" id="PS00712">
    <property type="entry name" value="RIBOSOMAL_S17E"/>
    <property type="match status" value="1"/>
</dbReference>